<proteinExistence type="inferred from homology"/>
<comment type="function">
    <text evidence="1">Catalyzes the oxidative ring opening of 3-hydroxyanthranilate to 2-amino-3-carboxymuconate semialdehyde, which spontaneously cyclizes to quinolinate.</text>
</comment>
<comment type="catalytic activity">
    <reaction evidence="1">
        <text>3-hydroxyanthranilate + O2 = (2Z,4Z)-2-amino-3-carboxymuconate 6-semialdehyde</text>
        <dbReference type="Rhea" id="RHEA:17953"/>
        <dbReference type="ChEBI" id="CHEBI:15379"/>
        <dbReference type="ChEBI" id="CHEBI:36559"/>
        <dbReference type="ChEBI" id="CHEBI:77612"/>
        <dbReference type="EC" id="1.13.11.6"/>
    </reaction>
</comment>
<comment type="cofactor">
    <cofactor evidence="1">
        <name>Fe(2+)</name>
        <dbReference type="ChEBI" id="CHEBI:29033"/>
    </cofactor>
    <text evidence="1">Binds 2 Fe(2+) ions per subunit.</text>
</comment>
<comment type="pathway">
    <text evidence="1">Cofactor biosynthesis; NAD(+) biosynthesis; quinolinate from L-kynurenine: step 3/3.</text>
</comment>
<comment type="subunit">
    <text evidence="1">Homodimer.</text>
</comment>
<comment type="similarity">
    <text evidence="1">Belongs to the 3-HAO family.</text>
</comment>
<name>3HAO_XANC8</name>
<reference key="1">
    <citation type="journal article" date="2005" name="Genome Res.">
        <title>Comparative and functional genomic analyses of the pathogenicity of phytopathogen Xanthomonas campestris pv. campestris.</title>
        <authorList>
            <person name="Qian W."/>
            <person name="Jia Y."/>
            <person name="Ren S.-X."/>
            <person name="He Y.-Q."/>
            <person name="Feng J.-X."/>
            <person name="Lu L.-F."/>
            <person name="Sun Q."/>
            <person name="Ying G."/>
            <person name="Tang D.-J."/>
            <person name="Tang H."/>
            <person name="Wu W."/>
            <person name="Hao P."/>
            <person name="Wang L."/>
            <person name="Jiang B.-L."/>
            <person name="Zeng S."/>
            <person name="Gu W.-Y."/>
            <person name="Lu G."/>
            <person name="Rong L."/>
            <person name="Tian Y."/>
            <person name="Yao Z."/>
            <person name="Fu G."/>
            <person name="Chen B."/>
            <person name="Fang R."/>
            <person name="Qiang B."/>
            <person name="Chen Z."/>
            <person name="Zhao G.-P."/>
            <person name="Tang J.-L."/>
            <person name="He C."/>
        </authorList>
    </citation>
    <scope>NUCLEOTIDE SEQUENCE [LARGE SCALE GENOMIC DNA]</scope>
    <source>
        <strain>8004</strain>
    </source>
</reference>
<organism>
    <name type="scientific">Xanthomonas campestris pv. campestris (strain 8004)</name>
    <dbReference type="NCBI Taxonomy" id="314565"/>
    <lineage>
        <taxon>Bacteria</taxon>
        <taxon>Pseudomonadati</taxon>
        <taxon>Pseudomonadota</taxon>
        <taxon>Gammaproteobacteria</taxon>
        <taxon>Lysobacterales</taxon>
        <taxon>Lysobacteraceae</taxon>
        <taxon>Xanthomonas</taxon>
    </lineage>
</organism>
<keyword id="KW-0223">Dioxygenase</keyword>
<keyword id="KW-0408">Iron</keyword>
<keyword id="KW-0479">Metal-binding</keyword>
<keyword id="KW-0560">Oxidoreductase</keyword>
<keyword id="KW-0662">Pyridine nucleotide biosynthesis</keyword>
<feature type="chain" id="PRO_0000245481" description="3-hydroxyanthranilate 3,4-dioxygenase">
    <location>
        <begin position="1"/>
        <end position="176"/>
    </location>
</feature>
<feature type="binding site" evidence="1">
    <location>
        <position position="44"/>
    </location>
    <ligand>
        <name>O2</name>
        <dbReference type="ChEBI" id="CHEBI:15379"/>
    </ligand>
</feature>
<feature type="binding site" evidence="1">
    <location>
        <position position="48"/>
    </location>
    <ligand>
        <name>Fe cation</name>
        <dbReference type="ChEBI" id="CHEBI:24875"/>
        <label>1</label>
        <note>catalytic</note>
    </ligand>
</feature>
<feature type="binding site" evidence="1">
    <location>
        <position position="54"/>
    </location>
    <ligand>
        <name>Fe cation</name>
        <dbReference type="ChEBI" id="CHEBI:24875"/>
        <label>1</label>
        <note>catalytic</note>
    </ligand>
</feature>
<feature type="binding site" evidence="1">
    <location>
        <position position="54"/>
    </location>
    <ligand>
        <name>substrate</name>
    </ligand>
</feature>
<feature type="binding site" evidence="1">
    <location>
        <position position="92"/>
    </location>
    <ligand>
        <name>Fe cation</name>
        <dbReference type="ChEBI" id="CHEBI:24875"/>
        <label>1</label>
        <note>catalytic</note>
    </ligand>
</feature>
<feature type="binding site" evidence="1">
    <location>
        <position position="96"/>
    </location>
    <ligand>
        <name>substrate</name>
    </ligand>
</feature>
<feature type="binding site" evidence="1">
    <location>
        <position position="106"/>
    </location>
    <ligand>
        <name>substrate</name>
    </ligand>
</feature>
<feature type="binding site" evidence="1">
    <location>
        <position position="121"/>
    </location>
    <ligand>
        <name>Fe cation</name>
        <dbReference type="ChEBI" id="CHEBI:24875"/>
        <label>2</label>
    </ligand>
</feature>
<feature type="binding site" evidence="1">
    <location>
        <position position="124"/>
    </location>
    <ligand>
        <name>Fe cation</name>
        <dbReference type="ChEBI" id="CHEBI:24875"/>
        <label>2</label>
    </ligand>
</feature>
<feature type="binding site" evidence="1">
    <location>
        <position position="158"/>
    </location>
    <ligand>
        <name>Fe cation</name>
        <dbReference type="ChEBI" id="CHEBI:24875"/>
        <label>2</label>
    </ligand>
</feature>
<feature type="binding site" evidence="1">
    <location>
        <position position="161"/>
    </location>
    <ligand>
        <name>Fe cation</name>
        <dbReference type="ChEBI" id="CHEBI:24875"/>
        <label>2</label>
    </ligand>
</feature>
<accession>Q4UT95</accession>
<dbReference type="EC" id="1.13.11.6" evidence="1"/>
<dbReference type="EMBL" id="CP000050">
    <property type="protein sequence ID" value="AAY49728.1"/>
    <property type="molecule type" value="Genomic_DNA"/>
</dbReference>
<dbReference type="RefSeq" id="WP_011036739.1">
    <property type="nucleotide sequence ID" value="NZ_CP155948.1"/>
</dbReference>
<dbReference type="SMR" id="Q4UT95"/>
<dbReference type="KEGG" id="xcb:XC_2679"/>
<dbReference type="HOGENOM" id="CLU_095765_0_0_6"/>
<dbReference type="UniPathway" id="UPA00253">
    <property type="reaction ID" value="UER00330"/>
</dbReference>
<dbReference type="Proteomes" id="UP000000420">
    <property type="component" value="Chromosome"/>
</dbReference>
<dbReference type="GO" id="GO:0000334">
    <property type="term" value="F:3-hydroxyanthranilate 3,4-dioxygenase activity"/>
    <property type="evidence" value="ECO:0007669"/>
    <property type="project" value="UniProtKB-UniRule"/>
</dbReference>
<dbReference type="GO" id="GO:0008198">
    <property type="term" value="F:ferrous iron binding"/>
    <property type="evidence" value="ECO:0007669"/>
    <property type="project" value="UniProtKB-UniRule"/>
</dbReference>
<dbReference type="GO" id="GO:0043420">
    <property type="term" value="P:anthranilate metabolic process"/>
    <property type="evidence" value="ECO:0007669"/>
    <property type="project" value="UniProtKB-UniRule"/>
</dbReference>
<dbReference type="GO" id="GO:0006569">
    <property type="term" value="P:L-tryptophan catabolic process"/>
    <property type="evidence" value="ECO:0007669"/>
    <property type="project" value="UniProtKB-UniRule"/>
</dbReference>
<dbReference type="GO" id="GO:0009435">
    <property type="term" value="P:NAD biosynthetic process"/>
    <property type="evidence" value="ECO:0007669"/>
    <property type="project" value="UniProtKB-UniPathway"/>
</dbReference>
<dbReference type="GO" id="GO:0019805">
    <property type="term" value="P:quinolinate biosynthetic process"/>
    <property type="evidence" value="ECO:0007669"/>
    <property type="project" value="UniProtKB-UniRule"/>
</dbReference>
<dbReference type="CDD" id="cd06123">
    <property type="entry name" value="cupin_HAO"/>
    <property type="match status" value="1"/>
</dbReference>
<dbReference type="Gene3D" id="2.60.120.10">
    <property type="entry name" value="Jelly Rolls"/>
    <property type="match status" value="1"/>
</dbReference>
<dbReference type="HAMAP" id="MF_00825">
    <property type="entry name" value="3_HAO"/>
    <property type="match status" value="1"/>
</dbReference>
<dbReference type="InterPro" id="IPR010329">
    <property type="entry name" value="3hydroanth_dOase"/>
</dbReference>
<dbReference type="InterPro" id="IPR014710">
    <property type="entry name" value="RmlC-like_jellyroll"/>
</dbReference>
<dbReference type="InterPro" id="IPR011051">
    <property type="entry name" value="RmlC_Cupin_sf"/>
</dbReference>
<dbReference type="NCBIfam" id="TIGR03037">
    <property type="entry name" value="anthran_nbaC"/>
    <property type="match status" value="1"/>
</dbReference>
<dbReference type="NCBIfam" id="NF009763">
    <property type="entry name" value="PRK13264.1"/>
    <property type="match status" value="1"/>
</dbReference>
<dbReference type="PANTHER" id="PTHR15497">
    <property type="entry name" value="3-HYDROXYANTHRANILATE 3,4-DIOXYGENASE"/>
    <property type="match status" value="1"/>
</dbReference>
<dbReference type="PANTHER" id="PTHR15497:SF1">
    <property type="entry name" value="3-HYDROXYANTHRANILATE 3,4-DIOXYGENASE"/>
    <property type="match status" value="1"/>
</dbReference>
<dbReference type="Pfam" id="PF06052">
    <property type="entry name" value="3-HAO"/>
    <property type="match status" value="1"/>
</dbReference>
<dbReference type="SUPFAM" id="SSF51182">
    <property type="entry name" value="RmlC-like cupins"/>
    <property type="match status" value="1"/>
</dbReference>
<evidence type="ECO:0000255" key="1">
    <source>
        <dbReference type="HAMAP-Rule" id="MF_00825"/>
    </source>
</evidence>
<protein>
    <recommendedName>
        <fullName evidence="1">3-hydroxyanthranilate 3,4-dioxygenase</fullName>
        <ecNumber evidence="1">1.13.11.6</ecNumber>
    </recommendedName>
    <alternativeName>
        <fullName evidence="1">3-hydroxyanthranilate oxygenase</fullName>
        <shortName evidence="1">3-HAO</shortName>
    </alternativeName>
    <alternativeName>
        <fullName evidence="1">3-hydroxyanthranilic acid dioxygenase</fullName>
        <shortName evidence="1">HAD</shortName>
    </alternativeName>
</protein>
<gene>
    <name evidence="1" type="primary">nbaC</name>
    <name type="ordered locus">XC_2679</name>
</gene>
<sequence>MLVPPINLHAWVEQHRHLLKPPVGNKCIQQDGFIIMIVGGPNARTDYHYDEGPEWFFQLEGEMVLKVQDDGTARDIPIRAGEIFLLPPKVPHSPQRAAGSIGLVIERERLPHEQDGLQWYCPQCNHKLYEAMFPLENIETDFPPVFDHFYRSLALRTCTQCGHVHPAPERYAAVEA</sequence>